<dbReference type="EC" id="3.6.4.12"/>
<dbReference type="EMBL" id="DAAA02016925">
    <property type="status" value="NOT_ANNOTATED_CDS"/>
    <property type="molecule type" value="Genomic_DNA"/>
</dbReference>
<dbReference type="EMBL" id="DAAA02016926">
    <property type="status" value="NOT_ANNOTATED_CDS"/>
    <property type="molecule type" value="Genomic_DNA"/>
</dbReference>
<dbReference type="SMR" id="E1B7X9"/>
<dbReference type="FunCoup" id="E1B7X9">
    <property type="interactions" value="4591"/>
</dbReference>
<dbReference type="STRING" id="9913.ENSBTAP00000045084"/>
<dbReference type="PaxDb" id="9913-ENSBTAP00000045084"/>
<dbReference type="eggNOG" id="KOG0389">
    <property type="taxonomic scope" value="Eukaryota"/>
</dbReference>
<dbReference type="HOGENOM" id="CLU_000315_16_3_1"/>
<dbReference type="InParanoid" id="E1B7X9"/>
<dbReference type="OrthoDB" id="448448at2759"/>
<dbReference type="TreeFam" id="TF105768"/>
<dbReference type="Proteomes" id="UP000009136">
    <property type="component" value="Unplaced"/>
</dbReference>
<dbReference type="GO" id="GO:0000785">
    <property type="term" value="C:chromatin"/>
    <property type="evidence" value="ECO:0000318"/>
    <property type="project" value="GO_Central"/>
</dbReference>
<dbReference type="GO" id="GO:0000792">
    <property type="term" value="C:heterochromatin"/>
    <property type="evidence" value="ECO:0000250"/>
    <property type="project" value="UniProtKB"/>
</dbReference>
<dbReference type="GO" id="GO:0005634">
    <property type="term" value="C:nucleus"/>
    <property type="evidence" value="ECO:0000250"/>
    <property type="project" value="UniProtKB"/>
</dbReference>
<dbReference type="GO" id="GO:0035861">
    <property type="term" value="C:site of double-strand break"/>
    <property type="evidence" value="ECO:0000250"/>
    <property type="project" value="UniProtKB"/>
</dbReference>
<dbReference type="GO" id="GO:0005524">
    <property type="term" value="F:ATP binding"/>
    <property type="evidence" value="ECO:0007669"/>
    <property type="project" value="UniProtKB-KW"/>
</dbReference>
<dbReference type="GO" id="GO:0016887">
    <property type="term" value="F:ATP hydrolysis activity"/>
    <property type="evidence" value="ECO:0007669"/>
    <property type="project" value="RHEA"/>
</dbReference>
<dbReference type="GO" id="GO:0140658">
    <property type="term" value="F:ATP-dependent chromatin remodeler activity"/>
    <property type="evidence" value="ECO:0000250"/>
    <property type="project" value="UniProtKB"/>
</dbReference>
<dbReference type="GO" id="GO:0003682">
    <property type="term" value="F:chromatin binding"/>
    <property type="evidence" value="ECO:0000318"/>
    <property type="project" value="GO_Central"/>
</dbReference>
<dbReference type="GO" id="GO:0003677">
    <property type="term" value="F:DNA binding"/>
    <property type="evidence" value="ECO:0000318"/>
    <property type="project" value="GO_Central"/>
</dbReference>
<dbReference type="GO" id="GO:0004386">
    <property type="term" value="F:helicase activity"/>
    <property type="evidence" value="ECO:0007669"/>
    <property type="project" value="UniProtKB-KW"/>
</dbReference>
<dbReference type="GO" id="GO:0140750">
    <property type="term" value="F:nucleosome array spacer activity"/>
    <property type="evidence" value="ECO:0000318"/>
    <property type="project" value="GO_Central"/>
</dbReference>
<dbReference type="GO" id="GO:0043130">
    <property type="term" value="F:ubiquitin binding"/>
    <property type="evidence" value="ECO:0007669"/>
    <property type="project" value="InterPro"/>
</dbReference>
<dbReference type="GO" id="GO:0051304">
    <property type="term" value="P:chromosome separation"/>
    <property type="evidence" value="ECO:0000250"/>
    <property type="project" value="UniProtKB"/>
</dbReference>
<dbReference type="GO" id="GO:0000729">
    <property type="term" value="P:DNA double-strand break processing"/>
    <property type="evidence" value="ECO:0000250"/>
    <property type="project" value="UniProtKB"/>
</dbReference>
<dbReference type="GO" id="GO:0045944">
    <property type="term" value="P:positive regulation of transcription by RNA polymerase II"/>
    <property type="evidence" value="ECO:0000318"/>
    <property type="project" value="GO_Central"/>
</dbReference>
<dbReference type="CDD" id="cd17998">
    <property type="entry name" value="DEXHc_SMARCAD1"/>
    <property type="match status" value="1"/>
</dbReference>
<dbReference type="CDD" id="cd18793">
    <property type="entry name" value="SF2_C_SNF"/>
    <property type="match status" value="1"/>
</dbReference>
<dbReference type="FunFam" id="3.40.50.10810:FF:000014">
    <property type="entry name" value="SWI/SNF-related matrix-associated actin-dependent regulator of chromatin subfamily A containing DEAD/H box 1"/>
    <property type="match status" value="1"/>
</dbReference>
<dbReference type="FunFam" id="3.40.50.300:FF:000639">
    <property type="entry name" value="SWI/SNF-related matrix-associated actin-dependent regulator of chromatin subfamily A containing DEAD/H box 1 isoform X1"/>
    <property type="match status" value="1"/>
</dbReference>
<dbReference type="Gene3D" id="3.40.50.300">
    <property type="entry name" value="P-loop containing nucleotide triphosphate hydrolases"/>
    <property type="match status" value="1"/>
</dbReference>
<dbReference type="Gene3D" id="3.40.50.10810">
    <property type="entry name" value="Tandem AAA-ATPase domain"/>
    <property type="match status" value="1"/>
</dbReference>
<dbReference type="InterPro" id="IPR003892">
    <property type="entry name" value="CUE"/>
</dbReference>
<dbReference type="InterPro" id="IPR014001">
    <property type="entry name" value="Helicase_ATP-bd"/>
</dbReference>
<dbReference type="InterPro" id="IPR001650">
    <property type="entry name" value="Helicase_C-like"/>
</dbReference>
<dbReference type="InterPro" id="IPR027417">
    <property type="entry name" value="P-loop_NTPase"/>
</dbReference>
<dbReference type="InterPro" id="IPR038718">
    <property type="entry name" value="SNF2-like_sf"/>
</dbReference>
<dbReference type="InterPro" id="IPR049730">
    <property type="entry name" value="SNF2/RAD54-like_C"/>
</dbReference>
<dbReference type="InterPro" id="IPR000330">
    <property type="entry name" value="SNF2_N"/>
</dbReference>
<dbReference type="PANTHER" id="PTHR10799">
    <property type="entry name" value="SNF2/RAD54 HELICASE FAMILY"/>
    <property type="match status" value="1"/>
</dbReference>
<dbReference type="Pfam" id="PF00271">
    <property type="entry name" value="Helicase_C"/>
    <property type="match status" value="1"/>
</dbReference>
<dbReference type="Pfam" id="PF00176">
    <property type="entry name" value="SNF2-rel_dom"/>
    <property type="match status" value="1"/>
</dbReference>
<dbReference type="SMART" id="SM00487">
    <property type="entry name" value="DEXDc"/>
    <property type="match status" value="1"/>
</dbReference>
<dbReference type="SMART" id="SM00490">
    <property type="entry name" value="HELICc"/>
    <property type="match status" value="1"/>
</dbReference>
<dbReference type="SUPFAM" id="SSF52540">
    <property type="entry name" value="P-loop containing nucleoside triphosphate hydrolases"/>
    <property type="match status" value="2"/>
</dbReference>
<dbReference type="PROSITE" id="PS51140">
    <property type="entry name" value="CUE"/>
    <property type="match status" value="1"/>
</dbReference>
<dbReference type="PROSITE" id="PS51192">
    <property type="entry name" value="HELICASE_ATP_BIND_1"/>
    <property type="match status" value="1"/>
</dbReference>
<dbReference type="PROSITE" id="PS51194">
    <property type="entry name" value="HELICASE_CTER"/>
    <property type="match status" value="1"/>
</dbReference>
<organism>
    <name type="scientific">Bos taurus</name>
    <name type="common">Bovine</name>
    <dbReference type="NCBI Taxonomy" id="9913"/>
    <lineage>
        <taxon>Eukaryota</taxon>
        <taxon>Metazoa</taxon>
        <taxon>Chordata</taxon>
        <taxon>Craniata</taxon>
        <taxon>Vertebrata</taxon>
        <taxon>Euteleostomi</taxon>
        <taxon>Mammalia</taxon>
        <taxon>Eutheria</taxon>
        <taxon>Laurasiatheria</taxon>
        <taxon>Artiodactyla</taxon>
        <taxon>Ruminantia</taxon>
        <taxon>Pecora</taxon>
        <taxon>Bovidae</taxon>
        <taxon>Bovinae</taxon>
        <taxon>Bos</taxon>
    </lineage>
</organism>
<evidence type="ECO:0000250" key="1"/>
<evidence type="ECO:0000250" key="2">
    <source>
        <dbReference type="UniProtKB" id="Q9H4L7"/>
    </source>
</evidence>
<evidence type="ECO:0000255" key="3"/>
<evidence type="ECO:0000255" key="4">
    <source>
        <dbReference type="PROSITE-ProRule" id="PRU00468"/>
    </source>
</evidence>
<evidence type="ECO:0000255" key="5">
    <source>
        <dbReference type="PROSITE-ProRule" id="PRU00541"/>
    </source>
</evidence>
<evidence type="ECO:0000255" key="6">
    <source>
        <dbReference type="PROSITE-ProRule" id="PRU00542"/>
    </source>
</evidence>
<evidence type="ECO:0000256" key="7">
    <source>
        <dbReference type="SAM" id="MobiDB-lite"/>
    </source>
</evidence>
<evidence type="ECO:0000305" key="8"/>
<gene>
    <name type="primary">SMARCAD1</name>
</gene>
<accession>E1B7X9</accession>
<keyword id="KW-0007">Acetylation</keyword>
<keyword id="KW-0067">ATP-binding</keyword>
<keyword id="KW-0156">Chromatin regulator</keyword>
<keyword id="KW-0158">Chromosome</keyword>
<keyword id="KW-0227">DNA damage</keyword>
<keyword id="KW-0234">DNA repair</keyword>
<keyword id="KW-0238">DNA-binding</keyword>
<keyword id="KW-0347">Helicase</keyword>
<keyword id="KW-0378">Hydrolase</keyword>
<keyword id="KW-1017">Isopeptide bond</keyword>
<keyword id="KW-0547">Nucleotide-binding</keyword>
<keyword id="KW-0539">Nucleus</keyword>
<keyword id="KW-0597">Phosphoprotein</keyword>
<keyword id="KW-1185">Reference proteome</keyword>
<keyword id="KW-0677">Repeat</keyword>
<keyword id="KW-0832">Ubl conjugation</keyword>
<proteinExistence type="inferred from homology"/>
<name>SMRCD_BOVIN</name>
<reference key="1">
    <citation type="journal article" date="2009" name="Genome Biol.">
        <title>A whole-genome assembly of the domestic cow, Bos taurus.</title>
        <authorList>
            <person name="Zimin A.V."/>
            <person name="Delcher A.L."/>
            <person name="Florea L."/>
            <person name="Kelley D.R."/>
            <person name="Schatz M.C."/>
            <person name="Puiu D."/>
            <person name="Hanrahan F."/>
            <person name="Pertea G."/>
            <person name="Van Tassell C.P."/>
            <person name="Sonstegard T.S."/>
            <person name="Marcais G."/>
            <person name="Roberts M."/>
            <person name="Subramanian P."/>
            <person name="Yorke J.A."/>
            <person name="Salzberg S.L."/>
        </authorList>
    </citation>
    <scope>NUCLEOTIDE SEQUENCE [LARGE SCALE GENOMIC DNA]</scope>
    <source>
        <strain>Hereford</strain>
    </source>
</reference>
<feature type="chain" id="PRO_0000416933" description="SWI/SNF-related matrix-associated actin-dependent regulator of chromatin subfamily A containing DEAD/H box 1">
    <location>
        <begin position="1"/>
        <end position="1028"/>
    </location>
</feature>
<feature type="domain" description="CUE 1" evidence="4">
    <location>
        <begin position="158"/>
        <end position="200"/>
    </location>
</feature>
<feature type="domain" description="CUE 2" evidence="4">
    <location>
        <begin position="253"/>
        <end position="296"/>
    </location>
</feature>
<feature type="domain" description="Helicase ATP-binding" evidence="5">
    <location>
        <begin position="511"/>
        <end position="679"/>
    </location>
</feature>
<feature type="domain" description="Helicase C-terminal" evidence="6">
    <location>
        <begin position="860"/>
        <end position="1012"/>
    </location>
</feature>
<feature type="region of interest" description="Disordered" evidence="7">
    <location>
        <begin position="13"/>
        <end position="81"/>
    </location>
</feature>
<feature type="region of interest" description="Disordered" evidence="7">
    <location>
        <begin position="204"/>
        <end position="253"/>
    </location>
</feature>
<feature type="region of interest" description="Disordered" evidence="7">
    <location>
        <begin position="303"/>
        <end position="348"/>
    </location>
</feature>
<feature type="short sequence motif" description="DEGH box" evidence="1">
    <location>
        <begin position="630"/>
        <end position="633"/>
    </location>
</feature>
<feature type="short sequence motif" description="Nuclear localization signal" evidence="3">
    <location>
        <begin position="723"/>
        <end position="740"/>
    </location>
</feature>
<feature type="short sequence motif" description="DEAD box" evidence="5">
    <location>
        <begin position="1007"/>
        <end position="1010"/>
    </location>
</feature>
<feature type="binding site" evidence="5">
    <location>
        <begin position="523"/>
        <end position="531"/>
    </location>
    <ligand>
        <name>ATP</name>
        <dbReference type="ChEBI" id="CHEBI:30616"/>
    </ligand>
</feature>
<feature type="binding site" evidence="5">
    <location>
        <begin position="899"/>
        <end position="906"/>
    </location>
    <ligand>
        <name>ATP</name>
        <dbReference type="ChEBI" id="CHEBI:30616"/>
    </ligand>
</feature>
<feature type="modified residue" description="N-acetylmethionine" evidence="2">
    <location>
        <position position="1"/>
    </location>
</feature>
<feature type="modified residue" description="Phosphothreonine" evidence="2">
    <location>
        <position position="54"/>
    </location>
</feature>
<feature type="modified residue" description="Phosphoserine" evidence="2">
    <location>
        <position position="57"/>
    </location>
</feature>
<feature type="modified residue" description="Phosphothreonine" evidence="2">
    <location>
        <position position="71"/>
    </location>
</feature>
<feature type="modified residue" description="Phosphoserine" evidence="2">
    <location>
        <position position="79"/>
    </location>
</feature>
<feature type="modified residue" description="Phosphoserine" evidence="2">
    <location>
        <position position="124"/>
    </location>
</feature>
<feature type="modified residue" description="Phosphoserine" evidence="2">
    <location>
        <position position="127"/>
    </location>
</feature>
<feature type="modified residue" description="Phosphoserine" evidence="2">
    <location>
        <position position="132"/>
    </location>
</feature>
<feature type="modified residue" description="Phosphoserine" evidence="2">
    <location>
        <position position="153"/>
    </location>
</feature>
<feature type="modified residue" description="Phosphoserine" evidence="2">
    <location>
        <position position="213"/>
    </location>
</feature>
<feature type="modified residue" description="Phosphoserine" evidence="2">
    <location>
        <position position="216"/>
    </location>
</feature>
<feature type="modified residue" description="Phosphoserine" evidence="2">
    <location>
        <position position="241"/>
    </location>
</feature>
<feature type="modified residue" description="Phosphoserine" evidence="2">
    <location>
        <position position="244"/>
    </location>
</feature>
<feature type="modified residue" description="Phosphoserine" evidence="2">
    <location>
        <position position="304"/>
    </location>
</feature>
<feature type="cross-link" description="Glycyl lysine isopeptide (Lys-Gly) (interchain with G-Cter in SUMO2)" evidence="2">
    <location>
        <position position="77"/>
    </location>
</feature>
<feature type="cross-link" description="Glycyl lysine isopeptide (Lys-Gly) (interchain with G-Cter in SUMO2)" evidence="2">
    <location>
        <position position="84"/>
    </location>
</feature>
<feature type="cross-link" description="Glycyl lysine isopeptide (Lys-Gly) (interchain with G-Cter in SUMO2)" evidence="2">
    <location>
        <position position="337"/>
    </location>
</feature>
<feature type="cross-link" description="Glycyl lysine isopeptide (Lys-Gly) (interchain with G-Cter in SUMO2)" evidence="2">
    <location>
        <position position="473"/>
    </location>
</feature>
<feature type="cross-link" description="Glycyl lysine isopeptide (Lys-Gly) (interchain with G-Cter in SUMO2)" evidence="2">
    <location>
        <position position="726"/>
    </location>
</feature>
<feature type="cross-link" description="Glycyl lysine isopeptide (Lys-Gly) (interchain with G-Cter in SUMO2)" evidence="2">
    <location>
        <position position="998"/>
    </location>
</feature>
<sequence>MNLFNLDRFRFEKRNKIEEAPEATPQPSQPGPSSPISLSAEEENAEGEVSRAGTPDSDVTEKTEDSSVPETPENDRKASISYFKNQRGIQYIDLSSDSEDVVSPNCSSTVQEKKFNKDTVIIVSEPSEDEESQGLPTMATRNNNDITNLKNLSFFPNYSDNLSTVRQTRYSENLSSDLLKLIDSTSTMDGAIAAALLMFGDAEGGGPRKRKLSSSSEPFEEDEFNDDQSMKKKRLDHGEESNESAESSTNWEKQESIVLKLQKEFPNFDKEELREVLKEHEWMYTEALESLKVFAEDQDMQYASPSEFPNGKEVSSRSQNYPKNAAKTKLKQKCSMKPQNGFNKKRKKNVFNPKRVIEDSEYDSGSDVGSSLDEDYSSGEEVMEDGYKGKILHFLQDASIGELTLIPQCSQKKAQKITELRPFNSWEALFTKMSKTNGLSEDLIWHCKTLIQERDVVIKLMNKCEDISNKLTKQVTMLTGNGGGWNTEQPSILNQSLSLKPYQKVGLNWLALVHKHGLNGILADEMGLGKTIQAIAFLAYLYQEGNKGPHLIVVPASTIDNWLREVNLWCPTLKVLCYYGSQEERKQIRYNIHSRYEEYNVIVTTYNCAISSSDDRSLFRRLKLNYAIFDEGHMLKNMGSIRYQHLMTINANNRLLLTGTPVQNNLLELMSLLNFVMPHMFSSSTSEIRRMFSSKTKPADEQSIYEKERIAHAKQIIKPFILRRVKEEVLKQLPPKKDRIELCAMSEKQEQLYMNLFNRLKKSINNMEKNTEMCNVMMQLRKMANHPLLHRQYYTAEKLKEMSQLMLKEPTHCEANPDLIFEDMEVMTDFELHVLCKQYRHINNFQLDMDLILDSGKFRVLGCILSELKQKGDRVVLFSQFTMMLDILEVLLKHHQHRYLRLDGKTQISERIHLIDEFNTDMDIFVFLLSTKAGGLGINLTSANVVILHDIDCNPYNDKQAEDRCHRVGQTKEVLVIKLIGQGTIEESMLKINQQKLKLEQDMTTVDEGDEGSMPADIATLLKTSMGL</sequence>
<protein>
    <recommendedName>
        <fullName>SWI/SNF-related matrix-associated actin-dependent regulator of chromatin subfamily A containing DEAD/H box 1</fullName>
        <ecNumber>3.6.4.12</ecNumber>
    </recommendedName>
</protein>
<comment type="function">
    <text evidence="2">DNA helicase that possesses intrinsic ATP-dependent nucleosome-remodeling activity and is both required for DNA repair and heterochromatin organization. Promotes DNA end resection of double-strand breaks (DSBs) following DNA damage: probably acts by weakening histone DNA interactions in nucleosomes flanking DSBs. Required for the restoration of heterochromatin organization after replication. Acts at replication sites to facilitate the maintenance of heterochromatin by directing H3 and H4 histones deacetylation, H3 'Lys-9' trimethylation (H3K9me3) and restoration of silencing.</text>
</comment>
<comment type="catalytic activity">
    <reaction evidence="2">
        <text>ATP + H2O = ADP + phosphate + H(+)</text>
        <dbReference type="Rhea" id="RHEA:13065"/>
        <dbReference type="ChEBI" id="CHEBI:15377"/>
        <dbReference type="ChEBI" id="CHEBI:15378"/>
        <dbReference type="ChEBI" id="CHEBI:30616"/>
        <dbReference type="ChEBI" id="CHEBI:43474"/>
        <dbReference type="ChEBI" id="CHEBI:456216"/>
        <dbReference type="EC" id="3.6.4.12"/>
    </reaction>
    <physiologicalReaction direction="left-to-right" evidence="2">
        <dbReference type="Rhea" id="RHEA:13066"/>
    </physiologicalReaction>
</comment>
<comment type="subunit">
    <text evidence="2">Binds to DNA preferentially in the vicinity of transcriptional start sites. Interacts with MSH2 and TRIM28. Part of a complex composed of TRIM28, HDAC1, HDAC2 and EHMT2. Interacts with PCNA.</text>
</comment>
<comment type="subcellular location">
    <subcellularLocation>
        <location evidence="2">Nucleus</location>
    </subcellularLocation>
    <subcellularLocation>
        <location evidence="2">Chromosome</location>
    </subcellularLocation>
    <text evidence="2">Colocalizes with PCNA at replication forks during S phase. Recruited to double-strand breaks (DSBs) sites of DNA damage.</text>
</comment>
<comment type="similarity">
    <text evidence="8">Belongs to the SNF2/RAD54 helicase family.</text>
</comment>